<keyword id="KW-0963">Cytoplasm</keyword>
<keyword id="KW-0290">Folate-binding</keyword>
<keyword id="KW-1185">Reference proteome</keyword>
<keyword id="KW-0819">tRNA processing</keyword>
<accession>Q7N1C0</accession>
<proteinExistence type="inferred from homology"/>
<protein>
    <recommendedName>
        <fullName evidence="1">tRNA-modifying protein YgfZ</fullName>
    </recommendedName>
</protein>
<dbReference type="EMBL" id="BX571871">
    <property type="protein sequence ID" value="CAE15929.1"/>
    <property type="molecule type" value="Genomic_DNA"/>
</dbReference>
<dbReference type="RefSeq" id="WP_011147736.1">
    <property type="nucleotide sequence ID" value="NC_005126.1"/>
</dbReference>
<dbReference type="SMR" id="Q7N1C0"/>
<dbReference type="STRING" id="243265.plu3556"/>
<dbReference type="GeneID" id="48849798"/>
<dbReference type="KEGG" id="plu:plu3556"/>
<dbReference type="eggNOG" id="COG0354">
    <property type="taxonomic scope" value="Bacteria"/>
</dbReference>
<dbReference type="HOGENOM" id="CLU_007884_6_1_6"/>
<dbReference type="OrthoDB" id="9796287at2"/>
<dbReference type="Proteomes" id="UP000002514">
    <property type="component" value="Chromosome"/>
</dbReference>
<dbReference type="GO" id="GO:0005737">
    <property type="term" value="C:cytoplasm"/>
    <property type="evidence" value="ECO:0007669"/>
    <property type="project" value="UniProtKB-SubCell"/>
</dbReference>
<dbReference type="GO" id="GO:0005542">
    <property type="term" value="F:folic acid binding"/>
    <property type="evidence" value="ECO:0007669"/>
    <property type="project" value="UniProtKB-UniRule"/>
</dbReference>
<dbReference type="GO" id="GO:0016226">
    <property type="term" value="P:iron-sulfur cluster assembly"/>
    <property type="evidence" value="ECO:0007669"/>
    <property type="project" value="TreeGrafter"/>
</dbReference>
<dbReference type="GO" id="GO:0009451">
    <property type="term" value="P:RNA modification"/>
    <property type="evidence" value="ECO:0007669"/>
    <property type="project" value="InterPro"/>
</dbReference>
<dbReference type="GO" id="GO:0008033">
    <property type="term" value="P:tRNA processing"/>
    <property type="evidence" value="ECO:0007669"/>
    <property type="project" value="UniProtKB-UniRule"/>
</dbReference>
<dbReference type="FunFam" id="2.40.30.160:FF:000001">
    <property type="entry name" value="tRNA-modifying protein YgfZ"/>
    <property type="match status" value="1"/>
</dbReference>
<dbReference type="FunFam" id="3.30.70.1400:FF:000002">
    <property type="entry name" value="tRNA-modifying protein YgfZ"/>
    <property type="match status" value="1"/>
</dbReference>
<dbReference type="FunFam" id="3.30.70.1630:FF:000001">
    <property type="entry name" value="tRNA-modifying protein YgfZ"/>
    <property type="match status" value="1"/>
</dbReference>
<dbReference type="Gene3D" id="2.40.30.160">
    <property type="match status" value="1"/>
</dbReference>
<dbReference type="Gene3D" id="3.30.70.1630">
    <property type="match status" value="1"/>
</dbReference>
<dbReference type="Gene3D" id="3.30.70.1400">
    <property type="entry name" value="Aminomethyltransferase beta-barrel domains"/>
    <property type="match status" value="1"/>
</dbReference>
<dbReference type="HAMAP" id="MF_01175">
    <property type="entry name" value="tRNA_modifying_YgfZ"/>
    <property type="match status" value="1"/>
</dbReference>
<dbReference type="InterPro" id="IPR029043">
    <property type="entry name" value="GcvT/YgfZ_C"/>
</dbReference>
<dbReference type="InterPro" id="IPR023758">
    <property type="entry name" value="tRNA-modifying_YgfZ"/>
</dbReference>
<dbReference type="InterPro" id="IPR045179">
    <property type="entry name" value="YgfZ/GcvT"/>
</dbReference>
<dbReference type="InterPro" id="IPR017703">
    <property type="entry name" value="YgfZ/GcvT_CS"/>
</dbReference>
<dbReference type="InterPro" id="IPR048451">
    <property type="entry name" value="YgfZ_barrel"/>
</dbReference>
<dbReference type="NCBIfam" id="NF007110">
    <property type="entry name" value="PRK09559.1"/>
    <property type="match status" value="1"/>
</dbReference>
<dbReference type="NCBIfam" id="TIGR03317">
    <property type="entry name" value="ygfZ_signature"/>
    <property type="match status" value="1"/>
</dbReference>
<dbReference type="PANTHER" id="PTHR22602">
    <property type="entry name" value="TRANSFERASE CAF17, MITOCHONDRIAL-RELATED"/>
    <property type="match status" value="1"/>
</dbReference>
<dbReference type="PANTHER" id="PTHR22602:SF0">
    <property type="entry name" value="TRANSFERASE CAF17, MITOCHONDRIAL-RELATED"/>
    <property type="match status" value="1"/>
</dbReference>
<dbReference type="Pfam" id="PF21130">
    <property type="entry name" value="YgfZ_barrel"/>
    <property type="match status" value="1"/>
</dbReference>
<dbReference type="SUPFAM" id="SSF101790">
    <property type="entry name" value="Aminomethyltransferase beta-barrel domain"/>
    <property type="match status" value="1"/>
</dbReference>
<dbReference type="SUPFAM" id="SSF103025">
    <property type="entry name" value="Folate-binding domain"/>
    <property type="match status" value="1"/>
</dbReference>
<gene>
    <name type="ordered locus">plu3556</name>
</gene>
<comment type="function">
    <text evidence="1">Folate-binding protein involved in regulating the level of ATP-DnaA and in the modification of some tRNAs. It is probably a key factor in regulatory networks that act via tRNA modification, such as initiation of chromosomal replication.</text>
</comment>
<comment type="subcellular location">
    <subcellularLocation>
        <location evidence="1">Cytoplasm</location>
    </subcellularLocation>
</comment>
<comment type="similarity">
    <text evidence="1">Belongs to the tRNA-modifying YgfZ family.</text>
</comment>
<reference key="1">
    <citation type="journal article" date="2003" name="Nat. Biotechnol.">
        <title>The genome sequence of the entomopathogenic bacterium Photorhabdus luminescens.</title>
        <authorList>
            <person name="Duchaud E."/>
            <person name="Rusniok C."/>
            <person name="Frangeul L."/>
            <person name="Buchrieser C."/>
            <person name="Givaudan A."/>
            <person name="Taourit S."/>
            <person name="Bocs S."/>
            <person name="Boursaux-Eude C."/>
            <person name="Chandler M."/>
            <person name="Charles J.-F."/>
            <person name="Dassa E."/>
            <person name="Derose R."/>
            <person name="Derzelle S."/>
            <person name="Freyssinet G."/>
            <person name="Gaudriault S."/>
            <person name="Medigue C."/>
            <person name="Lanois A."/>
            <person name="Powell K."/>
            <person name="Siguier P."/>
            <person name="Vincent R."/>
            <person name="Wingate V."/>
            <person name="Zouine M."/>
            <person name="Glaser P."/>
            <person name="Boemare N."/>
            <person name="Danchin A."/>
            <person name="Kunst F."/>
        </authorList>
    </citation>
    <scope>NUCLEOTIDE SEQUENCE [LARGE SCALE GENOMIC DNA]</scope>
    <source>
        <strain>DSM 15139 / CIP 105565 / TT01</strain>
    </source>
</reference>
<feature type="chain" id="PRO_0000262894" description="tRNA-modifying protein YgfZ">
    <location>
        <begin position="1"/>
        <end position="329"/>
    </location>
</feature>
<feature type="binding site" evidence="1">
    <location>
        <position position="28"/>
    </location>
    <ligand>
        <name>folate</name>
        <dbReference type="ChEBI" id="CHEBI:62501"/>
    </ligand>
</feature>
<feature type="binding site" evidence="1">
    <location>
        <position position="188"/>
    </location>
    <ligand>
        <name>folate</name>
        <dbReference type="ChEBI" id="CHEBI:62501"/>
    </ligand>
</feature>
<name>YGFZ_PHOLL</name>
<evidence type="ECO:0000255" key="1">
    <source>
        <dbReference type="HAMAP-Rule" id="MF_01175"/>
    </source>
</evidence>
<sequence length="329" mass="36359">MAYKTPFSSQFPLSSSTLPLTLISLDDWGLVTATGPDTEKYLQGQVTADISALATNQHVLSAHCDAKGKMWSNLRLFHRGESFAYIERRSVLENQLTELKKYAVFSKIALAQDENALLLGVAGKNCRQALSSFFPTLPDADNAVVAHEATTLLHFSLPSERFLLVTNTATAEQLTEKLQAQLNNSEQWLALDIEAGFPIIDAANSTQFIPQATNLQALAGGVCFKKGCYTGQEMVARAKYRGANKRGMYWLAGSASKIPMAGDDLEWQLGDKWRRTGTVLAAVKLNNDNVWIQVVMNNDMESHSVFRVRDDEGHSLTIQPLPYSLNEEK</sequence>
<organism>
    <name type="scientific">Photorhabdus laumondii subsp. laumondii (strain DSM 15139 / CIP 105565 / TT01)</name>
    <name type="common">Photorhabdus luminescens subsp. laumondii</name>
    <dbReference type="NCBI Taxonomy" id="243265"/>
    <lineage>
        <taxon>Bacteria</taxon>
        <taxon>Pseudomonadati</taxon>
        <taxon>Pseudomonadota</taxon>
        <taxon>Gammaproteobacteria</taxon>
        <taxon>Enterobacterales</taxon>
        <taxon>Morganellaceae</taxon>
        <taxon>Photorhabdus</taxon>
    </lineage>
</organism>